<sequence>MLQSNEYFSGKVKSIGFTSSSTGRASVGVMAEGEYTFGTAEPEEMTVVSGALKVLLPGTVEWKVYTAGEVFNVPGHSEFHLQVAEPTSYLCRYL</sequence>
<evidence type="ECO:0000255" key="1">
    <source>
        <dbReference type="HAMAP-Rule" id="MF_01537"/>
    </source>
</evidence>
<organism>
    <name type="scientific">Salmonella dublin (strain CT_02021853)</name>
    <dbReference type="NCBI Taxonomy" id="439851"/>
    <lineage>
        <taxon>Bacteria</taxon>
        <taxon>Pseudomonadati</taxon>
        <taxon>Pseudomonadota</taxon>
        <taxon>Gammaproteobacteria</taxon>
        <taxon>Enterobacterales</taxon>
        <taxon>Enterobacteriaceae</taxon>
        <taxon>Salmonella</taxon>
    </lineage>
</organism>
<accession>B5FKP6</accession>
<proteinExistence type="inferred from homology"/>
<feature type="chain" id="PRO_1000198674" description="Pyrimidine/purine nucleoside phosphorylase">
    <location>
        <begin position="1"/>
        <end position="94"/>
    </location>
</feature>
<dbReference type="EC" id="2.4.2.1" evidence="1"/>
<dbReference type="EC" id="2.4.2.2" evidence="1"/>
<dbReference type="EMBL" id="CP001144">
    <property type="protein sequence ID" value="ACH75323.1"/>
    <property type="molecule type" value="Genomic_DNA"/>
</dbReference>
<dbReference type="RefSeq" id="WP_000941953.1">
    <property type="nucleotide sequence ID" value="NC_011205.1"/>
</dbReference>
<dbReference type="SMR" id="B5FKP6"/>
<dbReference type="KEGG" id="sed:SeD_A0429"/>
<dbReference type="HOGENOM" id="CLU_157874_0_0_6"/>
<dbReference type="Proteomes" id="UP000008322">
    <property type="component" value="Chromosome"/>
</dbReference>
<dbReference type="GO" id="GO:0005829">
    <property type="term" value="C:cytosol"/>
    <property type="evidence" value="ECO:0007669"/>
    <property type="project" value="TreeGrafter"/>
</dbReference>
<dbReference type="GO" id="GO:0047975">
    <property type="term" value="F:guanosine phosphorylase activity"/>
    <property type="evidence" value="ECO:0007669"/>
    <property type="project" value="UniProtKB-EC"/>
</dbReference>
<dbReference type="GO" id="GO:0004731">
    <property type="term" value="F:purine-nucleoside phosphorylase activity"/>
    <property type="evidence" value="ECO:0007669"/>
    <property type="project" value="UniProtKB-UniRule"/>
</dbReference>
<dbReference type="GO" id="GO:0009032">
    <property type="term" value="F:thymidine phosphorylase activity"/>
    <property type="evidence" value="ECO:0007669"/>
    <property type="project" value="UniProtKB-EC"/>
</dbReference>
<dbReference type="GO" id="GO:0004850">
    <property type="term" value="F:uridine phosphorylase activity"/>
    <property type="evidence" value="ECO:0007669"/>
    <property type="project" value="UniProtKB-EC"/>
</dbReference>
<dbReference type="CDD" id="cd20296">
    <property type="entry name" value="cupin_PpnP-like"/>
    <property type="match status" value="1"/>
</dbReference>
<dbReference type="FunFam" id="2.60.120.10:FF:000016">
    <property type="entry name" value="Pyrimidine/purine nucleoside phosphorylase"/>
    <property type="match status" value="1"/>
</dbReference>
<dbReference type="Gene3D" id="2.60.120.10">
    <property type="entry name" value="Jelly Rolls"/>
    <property type="match status" value="1"/>
</dbReference>
<dbReference type="HAMAP" id="MF_01537">
    <property type="entry name" value="Nucleos_phosphorylase_PpnP"/>
    <property type="match status" value="1"/>
</dbReference>
<dbReference type="InterPro" id="IPR009664">
    <property type="entry name" value="Ppnp"/>
</dbReference>
<dbReference type="InterPro" id="IPR014710">
    <property type="entry name" value="RmlC-like_jellyroll"/>
</dbReference>
<dbReference type="InterPro" id="IPR011051">
    <property type="entry name" value="RmlC_Cupin_sf"/>
</dbReference>
<dbReference type="NCBIfam" id="NF007875">
    <property type="entry name" value="PRK10579.1"/>
    <property type="match status" value="1"/>
</dbReference>
<dbReference type="PANTHER" id="PTHR36540">
    <property type="entry name" value="PYRIMIDINE/PURINE NUCLEOSIDE PHOSPHORYLASE"/>
    <property type="match status" value="1"/>
</dbReference>
<dbReference type="PANTHER" id="PTHR36540:SF1">
    <property type="entry name" value="PYRIMIDINE_PURINE NUCLEOSIDE PHOSPHORYLASE"/>
    <property type="match status" value="1"/>
</dbReference>
<dbReference type="Pfam" id="PF06865">
    <property type="entry name" value="Ppnp"/>
    <property type="match status" value="1"/>
</dbReference>
<dbReference type="SUPFAM" id="SSF51182">
    <property type="entry name" value="RmlC-like cupins"/>
    <property type="match status" value="1"/>
</dbReference>
<comment type="function">
    <text evidence="1">Catalyzes the phosphorolysis of diverse nucleosides, yielding D-ribose 1-phosphate and the respective free bases. Can use uridine, adenosine, guanosine, cytidine, thymidine, inosine and xanthosine as substrates. Also catalyzes the reverse reactions.</text>
</comment>
<comment type="catalytic activity">
    <reaction evidence="1">
        <text>a purine D-ribonucleoside + phosphate = a purine nucleobase + alpha-D-ribose 1-phosphate</text>
        <dbReference type="Rhea" id="RHEA:19805"/>
        <dbReference type="ChEBI" id="CHEBI:26386"/>
        <dbReference type="ChEBI" id="CHEBI:43474"/>
        <dbReference type="ChEBI" id="CHEBI:57720"/>
        <dbReference type="ChEBI" id="CHEBI:142355"/>
        <dbReference type="EC" id="2.4.2.1"/>
    </reaction>
</comment>
<comment type="catalytic activity">
    <reaction evidence="1">
        <text>adenosine + phosphate = alpha-D-ribose 1-phosphate + adenine</text>
        <dbReference type="Rhea" id="RHEA:27642"/>
        <dbReference type="ChEBI" id="CHEBI:16335"/>
        <dbReference type="ChEBI" id="CHEBI:16708"/>
        <dbReference type="ChEBI" id="CHEBI:43474"/>
        <dbReference type="ChEBI" id="CHEBI:57720"/>
        <dbReference type="EC" id="2.4.2.1"/>
    </reaction>
</comment>
<comment type="catalytic activity">
    <reaction evidence="1">
        <text>cytidine + phosphate = cytosine + alpha-D-ribose 1-phosphate</text>
        <dbReference type="Rhea" id="RHEA:52540"/>
        <dbReference type="ChEBI" id="CHEBI:16040"/>
        <dbReference type="ChEBI" id="CHEBI:17562"/>
        <dbReference type="ChEBI" id="CHEBI:43474"/>
        <dbReference type="ChEBI" id="CHEBI:57720"/>
        <dbReference type="EC" id="2.4.2.2"/>
    </reaction>
</comment>
<comment type="catalytic activity">
    <reaction evidence="1">
        <text>guanosine + phosphate = alpha-D-ribose 1-phosphate + guanine</text>
        <dbReference type="Rhea" id="RHEA:13233"/>
        <dbReference type="ChEBI" id="CHEBI:16235"/>
        <dbReference type="ChEBI" id="CHEBI:16750"/>
        <dbReference type="ChEBI" id="CHEBI:43474"/>
        <dbReference type="ChEBI" id="CHEBI:57720"/>
        <dbReference type="EC" id="2.4.2.1"/>
    </reaction>
</comment>
<comment type="catalytic activity">
    <reaction evidence="1">
        <text>inosine + phosphate = alpha-D-ribose 1-phosphate + hypoxanthine</text>
        <dbReference type="Rhea" id="RHEA:27646"/>
        <dbReference type="ChEBI" id="CHEBI:17368"/>
        <dbReference type="ChEBI" id="CHEBI:17596"/>
        <dbReference type="ChEBI" id="CHEBI:43474"/>
        <dbReference type="ChEBI" id="CHEBI:57720"/>
        <dbReference type="EC" id="2.4.2.1"/>
    </reaction>
</comment>
<comment type="catalytic activity">
    <reaction evidence="1">
        <text>thymidine + phosphate = 2-deoxy-alpha-D-ribose 1-phosphate + thymine</text>
        <dbReference type="Rhea" id="RHEA:16037"/>
        <dbReference type="ChEBI" id="CHEBI:17748"/>
        <dbReference type="ChEBI" id="CHEBI:17821"/>
        <dbReference type="ChEBI" id="CHEBI:43474"/>
        <dbReference type="ChEBI" id="CHEBI:57259"/>
        <dbReference type="EC" id="2.4.2.2"/>
    </reaction>
</comment>
<comment type="catalytic activity">
    <reaction evidence="1">
        <text>uridine + phosphate = alpha-D-ribose 1-phosphate + uracil</text>
        <dbReference type="Rhea" id="RHEA:24388"/>
        <dbReference type="ChEBI" id="CHEBI:16704"/>
        <dbReference type="ChEBI" id="CHEBI:17568"/>
        <dbReference type="ChEBI" id="CHEBI:43474"/>
        <dbReference type="ChEBI" id="CHEBI:57720"/>
        <dbReference type="EC" id="2.4.2.2"/>
    </reaction>
</comment>
<comment type="catalytic activity">
    <reaction evidence="1">
        <text>xanthosine + phosphate = alpha-D-ribose 1-phosphate + xanthine</text>
        <dbReference type="Rhea" id="RHEA:27638"/>
        <dbReference type="ChEBI" id="CHEBI:17712"/>
        <dbReference type="ChEBI" id="CHEBI:18107"/>
        <dbReference type="ChEBI" id="CHEBI:43474"/>
        <dbReference type="ChEBI" id="CHEBI:57720"/>
        <dbReference type="EC" id="2.4.2.1"/>
    </reaction>
</comment>
<comment type="similarity">
    <text evidence="1">Belongs to the nucleoside phosphorylase PpnP family.</text>
</comment>
<keyword id="KW-0328">Glycosyltransferase</keyword>
<keyword id="KW-0808">Transferase</keyword>
<name>PPNP_SALDC</name>
<gene>
    <name evidence="1" type="primary">ppnP</name>
    <name type="ordered locus">SeD_A0429</name>
</gene>
<protein>
    <recommendedName>
        <fullName evidence="1">Pyrimidine/purine nucleoside phosphorylase</fullName>
        <ecNumber evidence="1">2.4.2.1</ecNumber>
        <ecNumber evidence="1">2.4.2.2</ecNumber>
    </recommendedName>
    <alternativeName>
        <fullName evidence="1">Adenosine phosphorylase</fullName>
    </alternativeName>
    <alternativeName>
        <fullName evidence="1">Cytidine phosphorylase</fullName>
    </alternativeName>
    <alternativeName>
        <fullName evidence="1">Guanosine phosphorylase</fullName>
    </alternativeName>
    <alternativeName>
        <fullName evidence="1">Inosine phosphorylase</fullName>
    </alternativeName>
    <alternativeName>
        <fullName evidence="1">Thymidine phosphorylase</fullName>
    </alternativeName>
    <alternativeName>
        <fullName evidence="1">Uridine phosphorylase</fullName>
    </alternativeName>
    <alternativeName>
        <fullName evidence="1">Xanthosine phosphorylase</fullName>
    </alternativeName>
</protein>
<reference key="1">
    <citation type="journal article" date="2011" name="J. Bacteriol.">
        <title>Comparative genomics of 28 Salmonella enterica isolates: evidence for CRISPR-mediated adaptive sublineage evolution.</title>
        <authorList>
            <person name="Fricke W.F."/>
            <person name="Mammel M.K."/>
            <person name="McDermott P.F."/>
            <person name="Tartera C."/>
            <person name="White D.G."/>
            <person name="Leclerc J.E."/>
            <person name="Ravel J."/>
            <person name="Cebula T.A."/>
        </authorList>
    </citation>
    <scope>NUCLEOTIDE SEQUENCE [LARGE SCALE GENOMIC DNA]</scope>
    <source>
        <strain>CT_02021853</strain>
    </source>
</reference>